<evidence type="ECO:0000255" key="1"/>
<evidence type="ECO:0000255" key="2">
    <source>
        <dbReference type="PROSITE-ProRule" id="PRU00498"/>
    </source>
</evidence>
<evidence type="ECO:0000256" key="3">
    <source>
        <dbReference type="SAM" id="MobiDB-lite"/>
    </source>
</evidence>
<evidence type="ECO:0000269" key="4">
    <source>
    </source>
</evidence>
<evidence type="ECO:0000269" key="5">
    <source>
    </source>
</evidence>
<evidence type="ECO:0000269" key="6">
    <source>
    </source>
</evidence>
<evidence type="ECO:0000303" key="7">
    <source>
    </source>
</evidence>
<evidence type="ECO:0000305" key="8"/>
<evidence type="ECO:0000305" key="9">
    <source>
    </source>
</evidence>
<accession>A0A1V6PBC8</accession>
<feature type="chain" id="PRO_0000446478" description="MFS-type transporter calB">
    <location>
        <begin position="1"/>
        <end position="562"/>
    </location>
</feature>
<feature type="transmembrane region" description="Helical" evidence="1">
    <location>
        <begin position="57"/>
        <end position="77"/>
    </location>
</feature>
<feature type="transmembrane region" description="Helical" evidence="1">
    <location>
        <begin position="94"/>
        <end position="113"/>
    </location>
</feature>
<feature type="transmembrane region" description="Helical" evidence="1">
    <location>
        <begin position="123"/>
        <end position="143"/>
    </location>
</feature>
<feature type="transmembrane region" description="Helical" evidence="1">
    <location>
        <begin position="154"/>
        <end position="174"/>
    </location>
</feature>
<feature type="transmembrane region" description="Helical" evidence="1">
    <location>
        <begin position="184"/>
        <end position="204"/>
    </location>
</feature>
<feature type="transmembrane region" description="Helical" evidence="1">
    <location>
        <begin position="213"/>
        <end position="233"/>
    </location>
</feature>
<feature type="transmembrane region" description="Helical" evidence="1">
    <location>
        <begin position="256"/>
        <end position="276"/>
    </location>
</feature>
<feature type="transmembrane region" description="Helical" evidence="1">
    <location>
        <begin position="284"/>
        <end position="304"/>
    </location>
</feature>
<feature type="transmembrane region" description="Helical" evidence="1">
    <location>
        <begin position="329"/>
        <end position="349"/>
    </location>
</feature>
<feature type="transmembrane region" description="Helical" evidence="1">
    <location>
        <begin position="362"/>
        <end position="382"/>
    </location>
</feature>
<feature type="transmembrane region" description="Helical" evidence="1">
    <location>
        <begin position="389"/>
        <end position="409"/>
    </location>
</feature>
<feature type="transmembrane region" description="Helical" evidence="1">
    <location>
        <begin position="418"/>
        <end position="438"/>
    </location>
</feature>
<feature type="transmembrane region" description="Helical" evidence="1">
    <location>
        <begin position="451"/>
        <end position="471"/>
    </location>
</feature>
<feature type="transmembrane region" description="Helical" evidence="1">
    <location>
        <begin position="530"/>
        <end position="550"/>
    </location>
</feature>
<feature type="region of interest" description="Disordered" evidence="3">
    <location>
        <begin position="1"/>
        <end position="45"/>
    </location>
</feature>
<feature type="compositionally biased region" description="Polar residues" evidence="3">
    <location>
        <begin position="1"/>
        <end position="16"/>
    </location>
</feature>
<feature type="glycosylation site" description="N-linked (GlcNAc...) asparagine" evidence="2">
    <location>
        <position position="83"/>
    </location>
</feature>
<feature type="glycosylation site" description="N-linked (GlcNAc...) asparagine" evidence="2">
    <location>
        <position position="557"/>
    </location>
</feature>
<name>CALB_PENDC</name>
<dbReference type="EMBL" id="MDYL01000013">
    <property type="protein sequence ID" value="OQD73972.1"/>
    <property type="molecule type" value="Genomic_DNA"/>
</dbReference>
<dbReference type="SMR" id="A0A1V6PBC8"/>
<dbReference type="GlyCosmos" id="A0A1V6PBC8">
    <property type="glycosylation" value="2 sites, No reported glycans"/>
</dbReference>
<dbReference type="OMA" id="VGWYIGA"/>
<dbReference type="OrthoDB" id="10021397at2759"/>
<dbReference type="Proteomes" id="UP000191522">
    <property type="component" value="Unassembled WGS sequence"/>
</dbReference>
<dbReference type="GO" id="GO:0005886">
    <property type="term" value="C:plasma membrane"/>
    <property type="evidence" value="ECO:0007669"/>
    <property type="project" value="UniProtKB-SubCell"/>
</dbReference>
<dbReference type="GO" id="GO:0022857">
    <property type="term" value="F:transmembrane transporter activity"/>
    <property type="evidence" value="ECO:0007669"/>
    <property type="project" value="InterPro"/>
</dbReference>
<dbReference type="CDD" id="cd17502">
    <property type="entry name" value="MFS_Azr1_MDR_like"/>
    <property type="match status" value="1"/>
</dbReference>
<dbReference type="FunFam" id="1.20.1720.10:FF:000012">
    <property type="entry name" value="MFS toxin efflux pump (AflT)"/>
    <property type="match status" value="1"/>
</dbReference>
<dbReference type="Gene3D" id="1.20.1250.20">
    <property type="entry name" value="MFS general substrate transporter like domains"/>
    <property type="match status" value="1"/>
</dbReference>
<dbReference type="InterPro" id="IPR011701">
    <property type="entry name" value="MFS"/>
</dbReference>
<dbReference type="InterPro" id="IPR020846">
    <property type="entry name" value="MFS_dom"/>
</dbReference>
<dbReference type="InterPro" id="IPR036259">
    <property type="entry name" value="MFS_trans_sf"/>
</dbReference>
<dbReference type="PANTHER" id="PTHR23501">
    <property type="entry name" value="MAJOR FACILITATOR SUPERFAMILY"/>
    <property type="match status" value="1"/>
</dbReference>
<dbReference type="PANTHER" id="PTHR23501:SF193">
    <property type="entry name" value="MULTIDRUG TRANSPORTER, PUTATIVE (AFU_ORTHOLOGUE AFUA_8G00940)-RELATED"/>
    <property type="match status" value="1"/>
</dbReference>
<dbReference type="Pfam" id="PF07690">
    <property type="entry name" value="MFS_1"/>
    <property type="match status" value="1"/>
</dbReference>
<dbReference type="PRINTS" id="PR01036">
    <property type="entry name" value="TCRTETB"/>
</dbReference>
<dbReference type="SUPFAM" id="SSF103473">
    <property type="entry name" value="MFS general substrate transporter"/>
    <property type="match status" value="1"/>
</dbReference>
<dbReference type="PROSITE" id="PS50850">
    <property type="entry name" value="MFS"/>
    <property type="match status" value="1"/>
</dbReference>
<gene>
    <name evidence="7" type="primary">calB</name>
    <name type="ORF">PENDEC_c013G07044</name>
</gene>
<reference key="1">
    <citation type="journal article" date="2017" name="Nat. Microbiol.">
        <title>Global analysis of biosynthetic gene clusters reveals vast potential of secondary metabolite production in Penicillium species.</title>
        <authorList>
            <person name="Nielsen J.C."/>
            <person name="Grijseels S."/>
            <person name="Prigent S."/>
            <person name="Ji B."/>
            <person name="Dainat J."/>
            <person name="Nielsen K.F."/>
            <person name="Frisvad J.C."/>
            <person name="Workman M."/>
            <person name="Nielsen J."/>
        </authorList>
    </citation>
    <scope>NUCLEOTIDE SEQUENCE [LARGE SCALE GENOMIC DNA]</scope>
    <source>
        <strain>IBT 11843</strain>
    </source>
</reference>
<reference key="2">
    <citation type="journal article" date="1993" name="J. Antibiot.">
        <title>Calbistrins, novel antifungal agents produced by Penicillium restrictum. I. Production, taxonomy of the producing organism and biological activity.</title>
        <authorList>
            <person name="Jackson M."/>
            <person name="Karwowski J.P."/>
            <person name="Humphrey P.E."/>
            <person name="Kohl W.L."/>
            <person name="Barlow G.J."/>
            <person name="Tanaka S.K."/>
        </authorList>
    </citation>
    <scope>BIOTECHNOLOGY</scope>
</reference>
<reference key="3">
    <citation type="journal article" date="2013" name="Molecules">
        <title>Bio-activity and dereplication-based discovery of ophiobolins and other fungal secondary metabolites targeting leukemia cells.</title>
        <authorList>
            <person name="Bladt T.T."/>
            <person name="Duerr C."/>
            <person name="Knudsen P.B."/>
            <person name="Kildgaard S."/>
            <person name="Frisvad J.C."/>
            <person name="Gotfredsen C.H."/>
            <person name="Seiffert M."/>
            <person name="Larsen T.O."/>
        </authorList>
    </citation>
    <scope>BIOTECHNOLOGY</scope>
</reference>
<reference key="4">
    <citation type="journal article" date="2018" name="Fungal Biol. Biotechnol.">
        <title>Identification of the decumbenone biosynthetic gene cluster in Penicillium decumbens and the importance for production of calbistrin.</title>
        <authorList>
            <person name="Grijseels S."/>
            <person name="Pohl C."/>
            <person name="Nielsen J.C."/>
            <person name="Wasil Z."/>
            <person name="Nygaard Y."/>
            <person name="Nielsen J."/>
            <person name="Frisvad J.C."/>
            <person name="Nielsen K.F."/>
            <person name="Workman M."/>
            <person name="Larsen T.O."/>
            <person name="Driessen A.J.M."/>
            <person name="Frandsen R.J.N."/>
        </authorList>
    </citation>
    <scope>IDENTIFICATION</scope>
    <scope>FUNCTION</scope>
    <scope>DISRUPTION PHENOTYPE</scope>
    <scope>INDUCTION</scope>
</reference>
<keyword id="KW-1003">Cell membrane</keyword>
<keyword id="KW-0325">Glycoprotein</keyword>
<keyword id="KW-0472">Membrane</keyword>
<keyword id="KW-1185">Reference proteome</keyword>
<keyword id="KW-0812">Transmembrane</keyword>
<keyword id="KW-1133">Transmembrane helix</keyword>
<organism>
    <name type="scientific">Penicillium decumbens</name>
    <dbReference type="NCBI Taxonomy" id="69771"/>
    <lineage>
        <taxon>Eukaryota</taxon>
        <taxon>Fungi</taxon>
        <taxon>Dikarya</taxon>
        <taxon>Ascomycota</taxon>
        <taxon>Pezizomycotina</taxon>
        <taxon>Eurotiomycetes</taxon>
        <taxon>Eurotiomycetidae</taxon>
        <taxon>Eurotiales</taxon>
        <taxon>Aspergillaceae</taxon>
        <taxon>Penicillium</taxon>
    </lineage>
</organism>
<proteinExistence type="evidence at protein level"/>
<sequence>MDEVTRTAQRSPSITETHAGETKLAGPGEKEGDVESPVDPSADSEQNRQQITGLQLFAILASVTLSAFLMLLDGSIIGVAIPNITSQFHSIDDIGWYTAAYQLASAALQPLSGKIYSSFSTKWTYLFFFGLFELGSLICGVANSSSMLIGGRAVAGLGSSGLLNGGMTIIAGAVPLEKRPVYTGIYLGISQLGIVCGPLIGGALTEYTTWRWCFYINLPVGAVTAILLLFLQVPELTEKPRFTFALVRRVIPELDLIGFTLFAPAAIMVLLALYYGGNDFPWDSSQVIGLFCGAGVTIIVFALWERRVGDRAMIPPSMVSHRIVYTSAINGAALVASILVAAQYLPIYFQGVRGYGPAMSGVNTLPGILSQLLTVILSGVLVQKVGYYLPFAAAGSAISAVGNGIVTLFSPTTPTAKWIGYQIVLGSGRGIGMQMGIIAIQNLLPPEKISVGIAFMIFCQNFAGAIFVVVGEVIFTQQLVKQIQAHAPSVKVDAALAAGASSSSLRALVPPGSPELQGVLLAFSNSVDRVFYLLMSLSLAGFVAAFGMGWVDTRKKNKSETE</sequence>
<protein>
    <recommendedName>
        <fullName evidence="7">MFS-type transporter calB</fullName>
    </recommendedName>
    <alternativeName>
        <fullName evidence="7">Calbistrin biosynthesis cluster protein B</fullName>
    </alternativeName>
</protein>
<comment type="function">
    <text evidence="5">MFS-type transporter; part of the gene cluster that mediates the biosynthesis of calbistrin A and related compounds. Calbistrin A is a secondary metabolite with an interesting structure that was recently found to have bioactivity against leukemia cells. It consists of two polyketides linked by an ester bond: a bicyclic decalin containing polyketide and a linear 12 carbon dioic acid structure (PubMed:30598828). Required for the secretion of calbistrin A and calbistrin C, as well as of related compounds decumbenone A, B and C (PubMed:30598828).</text>
</comment>
<comment type="subcellular location">
    <subcellularLocation>
        <location evidence="9">Cell membrane</location>
        <topology evidence="1">Multi-pass membrane protein</topology>
    </subcellularLocation>
</comment>
<comment type="induction">
    <text evidence="5">Expression is induced in complex medium (Czapek yeast autolysate medium) supporting calbistrin production (PubMed:30598828). Expression is positively regulated by the calbistrin biosynthesis cluster-specific transcription factor calC (PubMed:30598828).</text>
</comment>
<comment type="disruption phenotype">
    <text evidence="5">Leads to an almost complete absence of calbistrin A and calbistrin C, and a decreased abundance of decumbenone A, B and C in the extracellular medium.</text>
</comment>
<comment type="biotechnology">
    <text evidence="4 6">Calbistrin A has been reported to possess a number of interesting bioactivities including antifungal active against Candida albicans and cytotoxic toward both healthy and leukemic human cells.</text>
</comment>
<comment type="similarity">
    <text evidence="8">Belongs to the major facilitator superfamily. TCR/Tet family.</text>
</comment>